<sequence>MNHIFKHIPVMKKELIDSLKIKKNGIYIDSTFGTGGHSNEILKKLGQSGRLYSIDRDPIAFSIGSKIKDSRFHIINENFSKLLDFAKNEKIIGKVNGIIFDLGVSSIQIDDYRRGFSFKNDGPLDMRMNPNYGISASEWLFESNVKEISFVLKNFGEERFSRKIAYAIKRRSQIKKITSTLELANIIKKTIPTKNKFKHPARRSFQAIRIYINQELEEIHKALESTLKILKPGGRISIISFHSLEDRLVKKFMIKNSTKAIIPYGMPITEEQLNRLTTCKLKIINRILPTQNEINNNPRARSSVLRIAEIQE</sequence>
<organism>
    <name type="scientific">Buchnera aphidicola subsp. Acyrthosiphon pisum (strain Tuc7)</name>
    <dbReference type="NCBI Taxonomy" id="561501"/>
    <lineage>
        <taxon>Bacteria</taxon>
        <taxon>Pseudomonadati</taxon>
        <taxon>Pseudomonadota</taxon>
        <taxon>Gammaproteobacteria</taxon>
        <taxon>Enterobacterales</taxon>
        <taxon>Erwiniaceae</taxon>
        <taxon>Buchnera</taxon>
    </lineage>
</organism>
<proteinExistence type="inferred from homology"/>
<keyword id="KW-0963">Cytoplasm</keyword>
<keyword id="KW-0489">Methyltransferase</keyword>
<keyword id="KW-0698">rRNA processing</keyword>
<keyword id="KW-0949">S-adenosyl-L-methionine</keyword>
<keyword id="KW-0808">Transferase</keyword>
<comment type="function">
    <text evidence="1">Specifically methylates the N4 position of cytidine in position 1402 (C1402) of 16S rRNA.</text>
</comment>
<comment type="catalytic activity">
    <reaction evidence="1">
        <text>cytidine(1402) in 16S rRNA + S-adenosyl-L-methionine = N(4)-methylcytidine(1402) in 16S rRNA + S-adenosyl-L-homocysteine + H(+)</text>
        <dbReference type="Rhea" id="RHEA:42928"/>
        <dbReference type="Rhea" id="RHEA-COMP:10286"/>
        <dbReference type="Rhea" id="RHEA-COMP:10287"/>
        <dbReference type="ChEBI" id="CHEBI:15378"/>
        <dbReference type="ChEBI" id="CHEBI:57856"/>
        <dbReference type="ChEBI" id="CHEBI:59789"/>
        <dbReference type="ChEBI" id="CHEBI:74506"/>
        <dbReference type="ChEBI" id="CHEBI:82748"/>
        <dbReference type="EC" id="2.1.1.199"/>
    </reaction>
</comment>
<comment type="subcellular location">
    <subcellularLocation>
        <location evidence="1">Cytoplasm</location>
    </subcellularLocation>
</comment>
<comment type="similarity">
    <text evidence="1">Belongs to the methyltransferase superfamily. RsmH family.</text>
</comment>
<gene>
    <name evidence="1" type="primary">rsmH</name>
    <name type="synonym">mraW</name>
    <name type="ordered locus">BUAPTUC7_222</name>
</gene>
<dbReference type="EC" id="2.1.1.199" evidence="1"/>
<dbReference type="EMBL" id="CP001158">
    <property type="protein sequence ID" value="ACL30041.1"/>
    <property type="molecule type" value="Genomic_DNA"/>
</dbReference>
<dbReference type="RefSeq" id="WP_012619476.1">
    <property type="nucleotide sequence ID" value="NC_011834.1"/>
</dbReference>
<dbReference type="SMR" id="B8D7C6"/>
<dbReference type="KEGG" id="bau:BUAPTUC7_222"/>
<dbReference type="HOGENOM" id="CLU_038422_2_0_6"/>
<dbReference type="GO" id="GO:0005737">
    <property type="term" value="C:cytoplasm"/>
    <property type="evidence" value="ECO:0007669"/>
    <property type="project" value="UniProtKB-SubCell"/>
</dbReference>
<dbReference type="GO" id="GO:0071424">
    <property type="term" value="F:rRNA (cytosine-N4-)-methyltransferase activity"/>
    <property type="evidence" value="ECO:0007669"/>
    <property type="project" value="UniProtKB-UniRule"/>
</dbReference>
<dbReference type="GO" id="GO:0070475">
    <property type="term" value="P:rRNA base methylation"/>
    <property type="evidence" value="ECO:0007669"/>
    <property type="project" value="UniProtKB-UniRule"/>
</dbReference>
<dbReference type="Gene3D" id="1.10.150.170">
    <property type="entry name" value="Putative methyltransferase TM0872, insert domain"/>
    <property type="match status" value="1"/>
</dbReference>
<dbReference type="Gene3D" id="3.40.50.150">
    <property type="entry name" value="Vaccinia Virus protein VP39"/>
    <property type="match status" value="1"/>
</dbReference>
<dbReference type="HAMAP" id="MF_01007">
    <property type="entry name" value="16SrRNA_methyltr_H"/>
    <property type="match status" value="1"/>
</dbReference>
<dbReference type="InterPro" id="IPR002903">
    <property type="entry name" value="RsmH"/>
</dbReference>
<dbReference type="InterPro" id="IPR023397">
    <property type="entry name" value="SAM-dep_MeTrfase_MraW_recog"/>
</dbReference>
<dbReference type="InterPro" id="IPR029063">
    <property type="entry name" value="SAM-dependent_MTases_sf"/>
</dbReference>
<dbReference type="NCBIfam" id="TIGR00006">
    <property type="entry name" value="16S rRNA (cytosine(1402)-N(4))-methyltransferase RsmH"/>
    <property type="match status" value="1"/>
</dbReference>
<dbReference type="PANTHER" id="PTHR11265:SF0">
    <property type="entry name" value="12S RRNA N4-METHYLCYTIDINE METHYLTRANSFERASE"/>
    <property type="match status" value="1"/>
</dbReference>
<dbReference type="PANTHER" id="PTHR11265">
    <property type="entry name" value="S-ADENOSYL-METHYLTRANSFERASE MRAW"/>
    <property type="match status" value="1"/>
</dbReference>
<dbReference type="Pfam" id="PF01795">
    <property type="entry name" value="Methyltransf_5"/>
    <property type="match status" value="1"/>
</dbReference>
<dbReference type="PIRSF" id="PIRSF004486">
    <property type="entry name" value="MraW"/>
    <property type="match status" value="1"/>
</dbReference>
<dbReference type="SUPFAM" id="SSF81799">
    <property type="entry name" value="Putative methyltransferase TM0872, insert domain"/>
    <property type="match status" value="1"/>
</dbReference>
<dbReference type="SUPFAM" id="SSF53335">
    <property type="entry name" value="S-adenosyl-L-methionine-dependent methyltransferases"/>
    <property type="match status" value="1"/>
</dbReference>
<accession>B8D7C6</accession>
<feature type="chain" id="PRO_1000148840" description="Ribosomal RNA small subunit methyltransferase H">
    <location>
        <begin position="1"/>
        <end position="312"/>
    </location>
</feature>
<feature type="binding site" evidence="1">
    <location>
        <begin position="35"/>
        <end position="37"/>
    </location>
    <ligand>
        <name>S-adenosyl-L-methionine</name>
        <dbReference type="ChEBI" id="CHEBI:59789"/>
    </ligand>
</feature>
<feature type="binding site" evidence="1">
    <location>
        <position position="55"/>
    </location>
    <ligand>
        <name>S-adenosyl-L-methionine</name>
        <dbReference type="ChEBI" id="CHEBI:59789"/>
    </ligand>
</feature>
<feature type="binding site" evidence="1">
    <location>
        <position position="85"/>
    </location>
    <ligand>
        <name>S-adenosyl-L-methionine</name>
        <dbReference type="ChEBI" id="CHEBI:59789"/>
    </ligand>
</feature>
<feature type="binding site" evidence="1">
    <location>
        <position position="101"/>
    </location>
    <ligand>
        <name>S-adenosyl-L-methionine</name>
        <dbReference type="ChEBI" id="CHEBI:59789"/>
    </ligand>
</feature>
<feature type="binding site" evidence="1">
    <location>
        <position position="108"/>
    </location>
    <ligand>
        <name>S-adenosyl-L-methionine</name>
        <dbReference type="ChEBI" id="CHEBI:59789"/>
    </ligand>
</feature>
<reference key="1">
    <citation type="journal article" date="2009" name="Science">
        <title>The dynamics and time scale of ongoing genomic erosion in symbiotic bacteria.</title>
        <authorList>
            <person name="Moran N.A."/>
            <person name="McLaughlin H.J."/>
            <person name="Sorek R."/>
        </authorList>
    </citation>
    <scope>NUCLEOTIDE SEQUENCE [LARGE SCALE GENOMIC DNA]</scope>
    <source>
        <strain>Tuc7</strain>
    </source>
</reference>
<evidence type="ECO:0000255" key="1">
    <source>
        <dbReference type="HAMAP-Rule" id="MF_01007"/>
    </source>
</evidence>
<name>RSMH_BUCAT</name>
<protein>
    <recommendedName>
        <fullName evidence="1">Ribosomal RNA small subunit methyltransferase H</fullName>
        <ecNumber evidence="1">2.1.1.199</ecNumber>
    </recommendedName>
    <alternativeName>
        <fullName evidence="1">16S rRNA m(4)C1402 methyltransferase</fullName>
    </alternativeName>
    <alternativeName>
        <fullName evidence="1">rRNA (cytosine-N(4)-)-methyltransferase RsmH</fullName>
    </alternativeName>
</protein>